<gene>
    <name evidence="1" type="primary">rpoB</name>
    <name type="ordered locus">EcolC_4038</name>
</gene>
<accession>B1IUR0</accession>
<organism>
    <name type="scientific">Escherichia coli (strain ATCC 8739 / DSM 1576 / NBRC 3972 / NCIMB 8545 / WDCM 00012 / Crooks)</name>
    <dbReference type="NCBI Taxonomy" id="481805"/>
    <lineage>
        <taxon>Bacteria</taxon>
        <taxon>Pseudomonadati</taxon>
        <taxon>Pseudomonadota</taxon>
        <taxon>Gammaproteobacteria</taxon>
        <taxon>Enterobacterales</taxon>
        <taxon>Enterobacteriaceae</taxon>
        <taxon>Escherichia</taxon>
    </lineage>
</organism>
<dbReference type="EC" id="2.7.7.6" evidence="1"/>
<dbReference type="EMBL" id="CP000946">
    <property type="protein sequence ID" value="ACA79637.1"/>
    <property type="molecule type" value="Genomic_DNA"/>
</dbReference>
<dbReference type="RefSeq" id="WP_000263098.1">
    <property type="nucleotide sequence ID" value="NZ_MTFT01000025.1"/>
</dbReference>
<dbReference type="SMR" id="B1IUR0"/>
<dbReference type="GeneID" id="93777907"/>
<dbReference type="KEGG" id="ecl:EcolC_4038"/>
<dbReference type="HOGENOM" id="CLU_000524_4_3_6"/>
<dbReference type="GO" id="GO:0000428">
    <property type="term" value="C:DNA-directed RNA polymerase complex"/>
    <property type="evidence" value="ECO:0007669"/>
    <property type="project" value="UniProtKB-KW"/>
</dbReference>
<dbReference type="GO" id="GO:0003677">
    <property type="term" value="F:DNA binding"/>
    <property type="evidence" value="ECO:0007669"/>
    <property type="project" value="UniProtKB-UniRule"/>
</dbReference>
<dbReference type="GO" id="GO:0003899">
    <property type="term" value="F:DNA-directed RNA polymerase activity"/>
    <property type="evidence" value="ECO:0007669"/>
    <property type="project" value="UniProtKB-UniRule"/>
</dbReference>
<dbReference type="GO" id="GO:0032549">
    <property type="term" value="F:ribonucleoside binding"/>
    <property type="evidence" value="ECO:0007669"/>
    <property type="project" value="InterPro"/>
</dbReference>
<dbReference type="GO" id="GO:0006351">
    <property type="term" value="P:DNA-templated transcription"/>
    <property type="evidence" value="ECO:0007669"/>
    <property type="project" value="UniProtKB-UniRule"/>
</dbReference>
<dbReference type="CDD" id="cd00653">
    <property type="entry name" value="RNA_pol_B_RPB2"/>
    <property type="match status" value="1"/>
</dbReference>
<dbReference type="FunFam" id="2.30.150.10:FF:000001">
    <property type="entry name" value="DNA-directed RNA polymerase subunit beta"/>
    <property type="match status" value="1"/>
</dbReference>
<dbReference type="FunFam" id="2.40.270.10:FF:000003">
    <property type="entry name" value="DNA-directed RNA polymerase subunit beta"/>
    <property type="match status" value="1"/>
</dbReference>
<dbReference type="FunFam" id="2.40.270.10:FF:000004">
    <property type="entry name" value="DNA-directed RNA polymerase subunit beta"/>
    <property type="match status" value="1"/>
</dbReference>
<dbReference type="FunFam" id="2.40.50.100:FF:000006">
    <property type="entry name" value="DNA-directed RNA polymerase subunit beta"/>
    <property type="match status" value="1"/>
</dbReference>
<dbReference type="FunFam" id="2.40.50.150:FF:000001">
    <property type="entry name" value="DNA-directed RNA polymerase subunit beta"/>
    <property type="match status" value="1"/>
</dbReference>
<dbReference type="FunFam" id="3.90.1100.10:FF:000002">
    <property type="entry name" value="DNA-directed RNA polymerase subunit beta"/>
    <property type="match status" value="1"/>
</dbReference>
<dbReference type="FunFam" id="3.90.1110.10:FF:000001">
    <property type="entry name" value="DNA-directed RNA polymerase subunit beta"/>
    <property type="match status" value="1"/>
</dbReference>
<dbReference type="FunFam" id="3.90.1110.10:FF:000004">
    <property type="entry name" value="DNA-directed RNA polymerase subunit beta"/>
    <property type="match status" value="1"/>
</dbReference>
<dbReference type="FunFam" id="3.90.1800.10:FF:000001">
    <property type="entry name" value="DNA-directed RNA polymerase subunit beta"/>
    <property type="match status" value="1"/>
</dbReference>
<dbReference type="Gene3D" id="2.40.50.100">
    <property type="match status" value="1"/>
</dbReference>
<dbReference type="Gene3D" id="2.40.50.150">
    <property type="match status" value="1"/>
</dbReference>
<dbReference type="Gene3D" id="3.90.1100.10">
    <property type="match status" value="2"/>
</dbReference>
<dbReference type="Gene3D" id="6.10.140.1670">
    <property type="match status" value="1"/>
</dbReference>
<dbReference type="Gene3D" id="2.30.150.10">
    <property type="entry name" value="DNA-directed RNA polymerase, beta subunit, external 1 domain"/>
    <property type="match status" value="1"/>
</dbReference>
<dbReference type="Gene3D" id="2.40.270.10">
    <property type="entry name" value="DNA-directed RNA polymerase, subunit 2, domain 6"/>
    <property type="match status" value="1"/>
</dbReference>
<dbReference type="Gene3D" id="3.90.1800.10">
    <property type="entry name" value="RNA polymerase alpha subunit dimerisation domain"/>
    <property type="match status" value="1"/>
</dbReference>
<dbReference type="Gene3D" id="3.90.1110.10">
    <property type="entry name" value="RNA polymerase Rpb2, domain 2"/>
    <property type="match status" value="1"/>
</dbReference>
<dbReference type="HAMAP" id="MF_01321">
    <property type="entry name" value="RNApol_bact_RpoB"/>
    <property type="match status" value="1"/>
</dbReference>
<dbReference type="InterPro" id="IPR042107">
    <property type="entry name" value="DNA-dir_RNA_pol_bsu_ext_1_sf"/>
</dbReference>
<dbReference type="InterPro" id="IPR019462">
    <property type="entry name" value="DNA-dir_RNA_pol_bsu_external_1"/>
</dbReference>
<dbReference type="InterPro" id="IPR015712">
    <property type="entry name" value="DNA-dir_RNA_pol_su2"/>
</dbReference>
<dbReference type="InterPro" id="IPR007120">
    <property type="entry name" value="DNA-dir_RNAP_su2_dom"/>
</dbReference>
<dbReference type="InterPro" id="IPR037033">
    <property type="entry name" value="DNA-dir_RNAP_su2_hyb_sf"/>
</dbReference>
<dbReference type="InterPro" id="IPR010243">
    <property type="entry name" value="RNA_pol_bsu_bac"/>
</dbReference>
<dbReference type="InterPro" id="IPR007121">
    <property type="entry name" value="RNA_pol_bsu_CS"/>
</dbReference>
<dbReference type="InterPro" id="IPR007644">
    <property type="entry name" value="RNA_pol_bsu_protrusion"/>
</dbReference>
<dbReference type="InterPro" id="IPR007642">
    <property type="entry name" value="RNA_pol_Rpb2_2"/>
</dbReference>
<dbReference type="InterPro" id="IPR037034">
    <property type="entry name" value="RNA_pol_Rpb2_2_sf"/>
</dbReference>
<dbReference type="InterPro" id="IPR007645">
    <property type="entry name" value="RNA_pol_Rpb2_3"/>
</dbReference>
<dbReference type="InterPro" id="IPR007641">
    <property type="entry name" value="RNA_pol_Rpb2_7"/>
</dbReference>
<dbReference type="InterPro" id="IPR014724">
    <property type="entry name" value="RNA_pol_RPB2_OB-fold"/>
</dbReference>
<dbReference type="NCBIfam" id="NF001616">
    <property type="entry name" value="PRK00405.1"/>
    <property type="match status" value="1"/>
</dbReference>
<dbReference type="NCBIfam" id="TIGR02013">
    <property type="entry name" value="rpoB"/>
    <property type="match status" value="1"/>
</dbReference>
<dbReference type="PANTHER" id="PTHR20856">
    <property type="entry name" value="DNA-DIRECTED RNA POLYMERASE I SUBUNIT 2"/>
    <property type="match status" value="1"/>
</dbReference>
<dbReference type="Pfam" id="PF04563">
    <property type="entry name" value="RNA_pol_Rpb2_1"/>
    <property type="match status" value="1"/>
</dbReference>
<dbReference type="Pfam" id="PF04561">
    <property type="entry name" value="RNA_pol_Rpb2_2"/>
    <property type="match status" value="2"/>
</dbReference>
<dbReference type="Pfam" id="PF04565">
    <property type="entry name" value="RNA_pol_Rpb2_3"/>
    <property type="match status" value="1"/>
</dbReference>
<dbReference type="Pfam" id="PF10385">
    <property type="entry name" value="RNA_pol_Rpb2_45"/>
    <property type="match status" value="1"/>
</dbReference>
<dbReference type="Pfam" id="PF00562">
    <property type="entry name" value="RNA_pol_Rpb2_6"/>
    <property type="match status" value="1"/>
</dbReference>
<dbReference type="Pfam" id="PF04560">
    <property type="entry name" value="RNA_pol_Rpb2_7"/>
    <property type="match status" value="1"/>
</dbReference>
<dbReference type="SUPFAM" id="SSF64484">
    <property type="entry name" value="beta and beta-prime subunits of DNA dependent RNA-polymerase"/>
    <property type="match status" value="1"/>
</dbReference>
<dbReference type="PROSITE" id="PS01166">
    <property type="entry name" value="RNA_POL_BETA"/>
    <property type="match status" value="1"/>
</dbReference>
<comment type="function">
    <text evidence="1">DNA-dependent RNA polymerase catalyzes the transcription of DNA into RNA using the four ribonucleoside triphosphates as substrates.</text>
</comment>
<comment type="catalytic activity">
    <reaction evidence="1">
        <text>RNA(n) + a ribonucleoside 5'-triphosphate = RNA(n+1) + diphosphate</text>
        <dbReference type="Rhea" id="RHEA:21248"/>
        <dbReference type="Rhea" id="RHEA-COMP:14527"/>
        <dbReference type="Rhea" id="RHEA-COMP:17342"/>
        <dbReference type="ChEBI" id="CHEBI:33019"/>
        <dbReference type="ChEBI" id="CHEBI:61557"/>
        <dbReference type="ChEBI" id="CHEBI:140395"/>
        <dbReference type="EC" id="2.7.7.6"/>
    </reaction>
</comment>
<comment type="subunit">
    <text evidence="1">The RNAP catalytic core consists of 2 alpha, 1 beta, 1 beta' and 1 omega subunit. When a sigma factor is associated with the core the holoenzyme is formed, which can initiate transcription.</text>
</comment>
<comment type="similarity">
    <text evidence="1">Belongs to the RNA polymerase beta chain family.</text>
</comment>
<proteinExistence type="inferred from homology"/>
<feature type="chain" id="PRO_1000086369" description="DNA-directed RNA polymerase subunit beta">
    <location>
        <begin position="1"/>
        <end position="1342"/>
    </location>
</feature>
<feature type="modified residue" description="N6-acetyllysine" evidence="1">
    <location>
        <position position="1022"/>
    </location>
</feature>
<feature type="modified residue" description="N6-acetyllysine" evidence="1">
    <location>
        <position position="1200"/>
    </location>
</feature>
<sequence length="1342" mass="150632">MVYSYTEKKRIRKDFGKRPQVLDVPYLLSIQLDSFQKFIEQDPEGQYGLEAAFRSVFPIQSYSGNSELQYVSYRLGEPVFDVQECQIRGVTYSAPLRVKLRLVIYEREAPEGTVKDIKEQEVYMGEIPLMTDNGTFVINGTERVIVSQLHRSPGVFFDSDKGKTHSSGKVLYNARIIPYRGSWLDFEFDPKDNLFVRIDRRRKLPATIILRALNYTTEQILDLFFEKVIFEIRDNKLQMELVPERLRGETASFDIEANGKVYVEKGRRITARHIRQLEKDDVKLIEVPVEYIAGKVVAKDYIDESTGELICAANMELSLDLLAKLSQSGHKRIETLFTNDLDHGPYISETLRVDPTNDRLSALVEIYRMMRPGEPPTREAAESLFENLFFSEDRYDLSAVGRMKFNRSLLREEIEGSGILSKDDIIDVMKKLIDIRNGKGEVDDIDHLGNRRIRSVGEMAENQFRVGLVRVERAVKERLSLGDLDTLMPQDMINAKPISAAVKEFFGSSQLSQFMDQNNPLSEITHKRRISALGPGGLTRERAGFEVRDVHPTHYGRVCPIETPEGPNIGLINSLSVYAQTNEYGFLETPYRKVTDGVVTDEIHYLSAIEEGNYVIAQANSNLDEEGHFVEDLVTCRSKGESSLFSRDQVDYMDVSTQQVVSVGASLIPFLEHDDANRALMGANMQRQAVPTLRADKPLVGTGMERAVAVDSGVTAVAKRGGVVQYVDASRIVIKVNEDEMYPGEAGIDIYNLTKYTRSNQNTCINQMPCVSLGEPVERGDVLADGPSTDLGELALGQNMRVAFMPWNGYNFEDSILVSERVVQEDRFTTIHIQELACVSRDTKLGPEEITADIPNVGEAALSKLDESGIVYIGAEVTGGDILVGKVTPKGETQLTPEEKLLRAIFGEKASDVKDSSLRVPNGVSGTVIDVQVFTRDGVEKDKRALEIEEMQLKQAKKDLSEELQILEAGLFSRIRAVLVAGGVEAEKLDKLPRDRWLELGLTDEEKQNQLEQLAEQYDELKHEFEKKLEAKRRKITQGDDLAPGVLKIVKVYLAVKRRIQPGDKMAGRHGNKGVISKINPIEDMPYDENGTPVDIVLNPLGVPSRMNIGQILETHLGMAAKGIGDKINAMLKQQQEVAKLREFIQRAYDLGADVRQKVDLSTFSDEEVMRLAENLRKGMPIATPVFDGAKEAEIKELLKLGDLPTSGQIRLYDGRTGEQFERPVTVGYMYMLKLNHLVDDKMHARSTGSYSLVTQQPLGGKAQFGGQRFGEMEVWALEAYGAAYTLQEMLTVKSDDVNGRTKMYKNIVDGNHQMEPGMPESFNVLLKEIRSLGINIELEDE</sequence>
<protein>
    <recommendedName>
        <fullName evidence="1">DNA-directed RNA polymerase subunit beta</fullName>
        <shortName evidence="1">RNAP subunit beta</shortName>
        <ecNumber evidence="1">2.7.7.6</ecNumber>
    </recommendedName>
    <alternativeName>
        <fullName evidence="1">RNA polymerase subunit beta</fullName>
    </alternativeName>
    <alternativeName>
        <fullName evidence="1">Transcriptase subunit beta</fullName>
    </alternativeName>
</protein>
<evidence type="ECO:0000255" key="1">
    <source>
        <dbReference type="HAMAP-Rule" id="MF_01321"/>
    </source>
</evidence>
<reference key="1">
    <citation type="submission" date="2008-02" db="EMBL/GenBank/DDBJ databases">
        <title>Complete sequence of Escherichia coli C str. ATCC 8739.</title>
        <authorList>
            <person name="Copeland A."/>
            <person name="Lucas S."/>
            <person name="Lapidus A."/>
            <person name="Glavina del Rio T."/>
            <person name="Dalin E."/>
            <person name="Tice H."/>
            <person name="Bruce D."/>
            <person name="Goodwin L."/>
            <person name="Pitluck S."/>
            <person name="Kiss H."/>
            <person name="Brettin T."/>
            <person name="Detter J.C."/>
            <person name="Han C."/>
            <person name="Kuske C.R."/>
            <person name="Schmutz J."/>
            <person name="Larimer F."/>
            <person name="Land M."/>
            <person name="Hauser L."/>
            <person name="Kyrpides N."/>
            <person name="Mikhailova N."/>
            <person name="Ingram L."/>
            <person name="Richardson P."/>
        </authorList>
    </citation>
    <scope>NUCLEOTIDE SEQUENCE [LARGE SCALE GENOMIC DNA]</scope>
    <source>
        <strain>ATCC 8739 / DSM 1576 / NBRC 3972 / NCIMB 8545 / WDCM 00012 / Crooks</strain>
    </source>
</reference>
<keyword id="KW-0007">Acetylation</keyword>
<keyword id="KW-0240">DNA-directed RNA polymerase</keyword>
<keyword id="KW-0548">Nucleotidyltransferase</keyword>
<keyword id="KW-0804">Transcription</keyword>
<keyword id="KW-0808">Transferase</keyword>
<name>RPOB_ECOLC</name>